<protein>
    <recommendedName>
        <fullName>Hylambates kassinin</fullName>
    </recommendedName>
    <alternativeName>
        <fullName>[Glu2,Pro5]-kassinin</fullName>
    </alternativeName>
</protein>
<comment type="function">
    <text>Tachykinins are active peptides which excite neurons, evoke behavioral responses, are potent vasodilators and secretagogues, and contract (directly or indirectly) many smooth muscles.</text>
</comment>
<comment type="subcellular location">
    <subcellularLocation>
        <location>Secreted</location>
    </subcellularLocation>
</comment>
<comment type="tissue specificity">
    <text>Expressed by the skin glands.</text>
</comment>
<comment type="similarity">
    <text evidence="2">Belongs to the tachykinin family.</text>
</comment>
<organism>
    <name type="scientific">Phlyctimantis maculatus</name>
    <name type="common">Red-legged running frog</name>
    <name type="synonym">Hylambates maculatus</name>
    <dbReference type="NCBI Taxonomy" id="2517390"/>
    <lineage>
        <taxon>Eukaryota</taxon>
        <taxon>Metazoa</taxon>
        <taxon>Chordata</taxon>
        <taxon>Craniata</taxon>
        <taxon>Vertebrata</taxon>
        <taxon>Euteleostomi</taxon>
        <taxon>Amphibia</taxon>
        <taxon>Batrachia</taxon>
        <taxon>Anura</taxon>
        <taxon>Neobatrachia</taxon>
        <taxon>Microhyloidea</taxon>
        <taxon>Hyperoliidae</taxon>
        <taxon>Kassina</taxon>
    </lineage>
</organism>
<sequence length="12" mass="1376">DEPKPDQFVGLM</sequence>
<keyword id="KW-0027">Amidation</keyword>
<keyword id="KW-0878">Amphibian defense peptide</keyword>
<keyword id="KW-0903">Direct protein sequencing</keyword>
<keyword id="KW-0527">Neuropeptide</keyword>
<keyword id="KW-0964">Secreted</keyword>
<dbReference type="PIR" id="S10059">
    <property type="entry name" value="S10059"/>
</dbReference>
<dbReference type="GO" id="GO:0005576">
    <property type="term" value="C:extracellular region"/>
    <property type="evidence" value="ECO:0007669"/>
    <property type="project" value="UniProtKB-SubCell"/>
</dbReference>
<dbReference type="GO" id="GO:0006952">
    <property type="term" value="P:defense response"/>
    <property type="evidence" value="ECO:0007669"/>
    <property type="project" value="UniProtKB-KW"/>
</dbReference>
<dbReference type="GO" id="GO:0007218">
    <property type="term" value="P:neuropeptide signaling pathway"/>
    <property type="evidence" value="ECO:0007669"/>
    <property type="project" value="UniProtKB-KW"/>
</dbReference>
<dbReference type="GO" id="GO:0007217">
    <property type="term" value="P:tachykinin receptor signaling pathway"/>
    <property type="evidence" value="ECO:0007669"/>
    <property type="project" value="InterPro"/>
</dbReference>
<dbReference type="InterPro" id="IPR013055">
    <property type="entry name" value="Tachy_Neuro_lke_CS"/>
</dbReference>
<dbReference type="InterPro" id="IPR008215">
    <property type="entry name" value="Tachykinin_dom"/>
</dbReference>
<dbReference type="Pfam" id="PF02202">
    <property type="entry name" value="Tachykinin"/>
    <property type="match status" value="1"/>
</dbReference>
<dbReference type="PROSITE" id="PS00267">
    <property type="entry name" value="TACHYKININ"/>
    <property type="match status" value="1"/>
</dbReference>
<reference key="1">
    <citation type="journal article" date="1981" name="Biomed. Res.">
        <title>New tachykinins, Glu2, Pro5-kassinin (hylambates-kassinin) and hylambatin, in the skin of the African rhacophorid frog Hylambates maculatus.</title>
        <authorList>
            <person name="Yasuhara T."/>
            <person name="Nakajima T."/>
            <person name="Erspamer G.F."/>
            <person name="Erspamer V."/>
        </authorList>
    </citation>
    <scope>PROTEIN SEQUENCE</scope>
    <scope>AMIDATION AT MET-12</scope>
    <source>
        <tissue>Skin secretion</tissue>
    </source>
</reference>
<feature type="peptide" id="PRO_0000044395" description="Hylambates kassinin">
    <location>
        <begin position="1"/>
        <end position="12"/>
    </location>
</feature>
<feature type="modified residue" description="Methionine amide" evidence="1">
    <location>
        <position position="12"/>
    </location>
</feature>
<accession>P08613</accession>
<name>TKN1_PHLMA</name>
<evidence type="ECO:0000269" key="1">
    <source ref="1"/>
</evidence>
<evidence type="ECO:0000305" key="2"/>
<proteinExistence type="evidence at protein level"/>